<comment type="function">
    <text evidence="1">Specifically dimethylates two adjacent adenosines (A1518 and A1519) in the loop of a conserved hairpin near the 3'-end of 16S rRNA in the 30S particle. May play a critical role in biogenesis of 30S subunits.</text>
</comment>
<comment type="catalytic activity">
    <reaction evidence="1">
        <text>adenosine(1518)/adenosine(1519) in 16S rRNA + 4 S-adenosyl-L-methionine = N(6)-dimethyladenosine(1518)/N(6)-dimethyladenosine(1519) in 16S rRNA + 4 S-adenosyl-L-homocysteine + 4 H(+)</text>
        <dbReference type="Rhea" id="RHEA:19609"/>
        <dbReference type="Rhea" id="RHEA-COMP:10232"/>
        <dbReference type="Rhea" id="RHEA-COMP:10233"/>
        <dbReference type="ChEBI" id="CHEBI:15378"/>
        <dbReference type="ChEBI" id="CHEBI:57856"/>
        <dbReference type="ChEBI" id="CHEBI:59789"/>
        <dbReference type="ChEBI" id="CHEBI:74411"/>
        <dbReference type="ChEBI" id="CHEBI:74493"/>
        <dbReference type="EC" id="2.1.1.182"/>
    </reaction>
</comment>
<comment type="subcellular location">
    <subcellularLocation>
        <location evidence="1">Cytoplasm</location>
    </subcellularLocation>
</comment>
<comment type="similarity">
    <text evidence="1">Belongs to the class I-like SAM-binding methyltransferase superfamily. rRNA adenine N(6)-methyltransferase family. RsmA subfamily.</text>
</comment>
<sequence>MRIADYSVTKAVLERHGFTFKKSFGQNFLTDTNILQKIVDTAEIDDQVNVIEIGPGIGALTEFLAERAAQVMAFEIDHRLVPILADTLRDFDNVTVVNEDILKVDLAQHIQNFKNPNLPIKVVANLPYYITTPILMHLIESGIPFSEFVVMMQKEVADRISAQPNTKAYGSLSIAVQYYMTAKVAFIVPRTVFVPAPNVDSAILKMVRRPEPAVAVEDENFFFKVSKASFTHRRKTLWNNLTGYFGKTEEVKDKLTKALDQAGLSPSVRGEALSLAEFAGLADALKGQGL</sequence>
<proteinExistence type="inferred from homology"/>
<evidence type="ECO:0000255" key="1">
    <source>
        <dbReference type="HAMAP-Rule" id="MF_00607"/>
    </source>
</evidence>
<accession>Q04II4</accession>
<protein>
    <recommendedName>
        <fullName evidence="1">Ribosomal RNA small subunit methyltransferase A</fullName>
        <ecNumber evidence="1">2.1.1.182</ecNumber>
    </recommendedName>
    <alternativeName>
        <fullName evidence="1">16S rRNA (adenine(1518)-N(6)/adenine(1519)-N(6))-dimethyltransferase</fullName>
    </alternativeName>
    <alternativeName>
        <fullName evidence="1">16S rRNA dimethyladenosine transferase</fullName>
    </alternativeName>
    <alternativeName>
        <fullName evidence="1">16S rRNA dimethylase</fullName>
    </alternativeName>
    <alternativeName>
        <fullName evidence="1">S-adenosylmethionine-6-N', N'-adenosyl(rRNA) dimethyltransferase</fullName>
    </alternativeName>
</protein>
<feature type="chain" id="PRO_1000056679" description="Ribosomal RNA small subunit methyltransferase A">
    <location>
        <begin position="1"/>
        <end position="290"/>
    </location>
</feature>
<feature type="binding site" evidence="1">
    <location>
        <position position="27"/>
    </location>
    <ligand>
        <name>S-adenosyl-L-methionine</name>
        <dbReference type="ChEBI" id="CHEBI:59789"/>
    </ligand>
</feature>
<feature type="binding site" evidence="1">
    <location>
        <position position="29"/>
    </location>
    <ligand>
        <name>S-adenosyl-L-methionine</name>
        <dbReference type="ChEBI" id="CHEBI:59789"/>
    </ligand>
</feature>
<feature type="binding site" evidence="1">
    <location>
        <position position="54"/>
    </location>
    <ligand>
        <name>S-adenosyl-L-methionine</name>
        <dbReference type="ChEBI" id="CHEBI:59789"/>
    </ligand>
</feature>
<feature type="binding site" evidence="1">
    <location>
        <position position="75"/>
    </location>
    <ligand>
        <name>S-adenosyl-L-methionine</name>
        <dbReference type="ChEBI" id="CHEBI:59789"/>
    </ligand>
</feature>
<feature type="binding site" evidence="1">
    <location>
        <position position="100"/>
    </location>
    <ligand>
        <name>S-adenosyl-L-methionine</name>
        <dbReference type="ChEBI" id="CHEBI:59789"/>
    </ligand>
</feature>
<feature type="binding site" evidence="1">
    <location>
        <position position="125"/>
    </location>
    <ligand>
        <name>S-adenosyl-L-methionine</name>
        <dbReference type="ChEBI" id="CHEBI:59789"/>
    </ligand>
</feature>
<name>RSMA_STRP2</name>
<reference key="1">
    <citation type="journal article" date="2007" name="J. Bacteriol.">
        <title>Genome sequence of Avery's virulent serotype 2 strain D39 of Streptococcus pneumoniae and comparison with that of unencapsulated laboratory strain R6.</title>
        <authorList>
            <person name="Lanie J.A."/>
            <person name="Ng W.-L."/>
            <person name="Kazmierczak K.M."/>
            <person name="Andrzejewski T.M."/>
            <person name="Davidsen T.M."/>
            <person name="Wayne K.J."/>
            <person name="Tettelin H."/>
            <person name="Glass J.I."/>
            <person name="Winkler M.E."/>
        </authorList>
    </citation>
    <scope>NUCLEOTIDE SEQUENCE [LARGE SCALE GENOMIC DNA]</scope>
    <source>
        <strain>D39 / NCTC 7466</strain>
    </source>
</reference>
<organism>
    <name type="scientific">Streptococcus pneumoniae serotype 2 (strain D39 / NCTC 7466)</name>
    <dbReference type="NCBI Taxonomy" id="373153"/>
    <lineage>
        <taxon>Bacteria</taxon>
        <taxon>Bacillati</taxon>
        <taxon>Bacillota</taxon>
        <taxon>Bacilli</taxon>
        <taxon>Lactobacillales</taxon>
        <taxon>Streptococcaceae</taxon>
        <taxon>Streptococcus</taxon>
    </lineage>
</organism>
<gene>
    <name evidence="1" type="primary">rsmA</name>
    <name evidence="1" type="synonym">ksgA</name>
    <name type="ordered locus">SPD_1782</name>
</gene>
<keyword id="KW-0963">Cytoplasm</keyword>
<keyword id="KW-0489">Methyltransferase</keyword>
<keyword id="KW-1185">Reference proteome</keyword>
<keyword id="KW-0694">RNA-binding</keyword>
<keyword id="KW-0698">rRNA processing</keyword>
<keyword id="KW-0949">S-adenosyl-L-methionine</keyword>
<keyword id="KW-0808">Transferase</keyword>
<dbReference type="EC" id="2.1.1.182" evidence="1"/>
<dbReference type="EMBL" id="CP000410">
    <property type="protein sequence ID" value="ABJ54063.1"/>
    <property type="molecule type" value="Genomic_DNA"/>
</dbReference>
<dbReference type="RefSeq" id="WP_001216869.1">
    <property type="nucleotide sequence ID" value="NZ_JAMLJR010000010.1"/>
</dbReference>
<dbReference type="SMR" id="Q04II4"/>
<dbReference type="PaxDb" id="373153-SPD_1782"/>
<dbReference type="KEGG" id="spd:SPD_1782"/>
<dbReference type="eggNOG" id="COG0030">
    <property type="taxonomic scope" value="Bacteria"/>
</dbReference>
<dbReference type="HOGENOM" id="CLU_041220_0_0_9"/>
<dbReference type="BioCyc" id="SPNE373153:G1G6V-1926-MONOMER"/>
<dbReference type="Proteomes" id="UP000001452">
    <property type="component" value="Chromosome"/>
</dbReference>
<dbReference type="GO" id="GO:0005829">
    <property type="term" value="C:cytosol"/>
    <property type="evidence" value="ECO:0007669"/>
    <property type="project" value="TreeGrafter"/>
</dbReference>
<dbReference type="GO" id="GO:0052908">
    <property type="term" value="F:16S rRNA (adenine(1518)-N(6)/adenine(1519)-N(6))-dimethyltransferase activity"/>
    <property type="evidence" value="ECO:0007669"/>
    <property type="project" value="UniProtKB-EC"/>
</dbReference>
<dbReference type="GO" id="GO:0003723">
    <property type="term" value="F:RNA binding"/>
    <property type="evidence" value="ECO:0007669"/>
    <property type="project" value="UniProtKB-KW"/>
</dbReference>
<dbReference type="CDD" id="cd02440">
    <property type="entry name" value="AdoMet_MTases"/>
    <property type="match status" value="1"/>
</dbReference>
<dbReference type="FunFam" id="1.10.8.100:FF:000005">
    <property type="entry name" value="Ribosomal RNA small subunit methyltransferase A"/>
    <property type="match status" value="1"/>
</dbReference>
<dbReference type="FunFam" id="3.40.50.150:FF:000023">
    <property type="entry name" value="Ribosomal RNA small subunit methyltransferase A"/>
    <property type="match status" value="1"/>
</dbReference>
<dbReference type="Gene3D" id="1.10.8.100">
    <property type="entry name" value="Ribosomal RNA adenine dimethylase-like, domain 2"/>
    <property type="match status" value="1"/>
</dbReference>
<dbReference type="Gene3D" id="3.40.50.150">
    <property type="entry name" value="Vaccinia Virus protein VP39"/>
    <property type="match status" value="1"/>
</dbReference>
<dbReference type="HAMAP" id="MF_00607">
    <property type="entry name" value="16SrRNA_methyltr_A"/>
    <property type="match status" value="1"/>
</dbReference>
<dbReference type="InterPro" id="IPR001737">
    <property type="entry name" value="KsgA/Erm"/>
</dbReference>
<dbReference type="InterPro" id="IPR023165">
    <property type="entry name" value="rRNA_Ade_diMease-like_C"/>
</dbReference>
<dbReference type="InterPro" id="IPR020596">
    <property type="entry name" value="rRNA_Ade_Mease_Trfase_CS"/>
</dbReference>
<dbReference type="InterPro" id="IPR020598">
    <property type="entry name" value="rRNA_Ade_methylase_Trfase_N"/>
</dbReference>
<dbReference type="InterPro" id="IPR011530">
    <property type="entry name" value="rRNA_adenine_dimethylase"/>
</dbReference>
<dbReference type="InterPro" id="IPR029063">
    <property type="entry name" value="SAM-dependent_MTases_sf"/>
</dbReference>
<dbReference type="NCBIfam" id="TIGR00755">
    <property type="entry name" value="ksgA"/>
    <property type="match status" value="1"/>
</dbReference>
<dbReference type="PANTHER" id="PTHR11727">
    <property type="entry name" value="DIMETHYLADENOSINE TRANSFERASE"/>
    <property type="match status" value="1"/>
</dbReference>
<dbReference type="PANTHER" id="PTHR11727:SF7">
    <property type="entry name" value="DIMETHYLADENOSINE TRANSFERASE-RELATED"/>
    <property type="match status" value="1"/>
</dbReference>
<dbReference type="Pfam" id="PF00398">
    <property type="entry name" value="RrnaAD"/>
    <property type="match status" value="1"/>
</dbReference>
<dbReference type="SMART" id="SM00650">
    <property type="entry name" value="rADc"/>
    <property type="match status" value="1"/>
</dbReference>
<dbReference type="SUPFAM" id="SSF53335">
    <property type="entry name" value="S-adenosyl-L-methionine-dependent methyltransferases"/>
    <property type="match status" value="1"/>
</dbReference>
<dbReference type="PROSITE" id="PS01131">
    <property type="entry name" value="RRNA_A_DIMETH"/>
    <property type="match status" value="1"/>
</dbReference>
<dbReference type="PROSITE" id="PS51689">
    <property type="entry name" value="SAM_RNA_A_N6_MT"/>
    <property type="match status" value="1"/>
</dbReference>